<feature type="chain" id="PRO_1000197106" description="N-(5'-phosphoribosyl)anthranilate isomerase">
    <location>
        <begin position="1"/>
        <end position="216"/>
    </location>
</feature>
<organism>
    <name type="scientific">Leptospira borgpetersenii serovar Hardjo-bovis (strain L550)</name>
    <dbReference type="NCBI Taxonomy" id="355276"/>
    <lineage>
        <taxon>Bacteria</taxon>
        <taxon>Pseudomonadati</taxon>
        <taxon>Spirochaetota</taxon>
        <taxon>Spirochaetia</taxon>
        <taxon>Leptospirales</taxon>
        <taxon>Leptospiraceae</taxon>
        <taxon>Leptospira</taxon>
    </lineage>
</organism>
<protein>
    <recommendedName>
        <fullName evidence="1">N-(5'-phosphoribosyl)anthranilate isomerase</fullName>
        <shortName evidence="1">PRAI</shortName>
        <ecNumber evidence="1">5.3.1.24</ecNumber>
    </recommendedName>
</protein>
<reference key="1">
    <citation type="journal article" date="2006" name="Proc. Natl. Acad. Sci. U.S.A.">
        <title>Genome reduction in Leptospira borgpetersenii reflects limited transmission potential.</title>
        <authorList>
            <person name="Bulach D.M."/>
            <person name="Zuerner R.L."/>
            <person name="Wilson P."/>
            <person name="Seemann T."/>
            <person name="McGrath A."/>
            <person name="Cullen P.A."/>
            <person name="Davis J."/>
            <person name="Johnson M."/>
            <person name="Kuczek E."/>
            <person name="Alt D.P."/>
            <person name="Peterson-Burch B."/>
            <person name="Coppel R.L."/>
            <person name="Rood J.I."/>
            <person name="Davies J.K."/>
            <person name="Adler B."/>
        </authorList>
    </citation>
    <scope>NUCLEOTIDE SEQUENCE [LARGE SCALE GENOMIC DNA]</scope>
    <source>
        <strain>L550</strain>
    </source>
</reference>
<accession>Q051T8</accession>
<proteinExistence type="inferred from homology"/>
<gene>
    <name evidence="1" type="primary">trpF</name>
    <name type="ordered locus">LBL_1418</name>
</gene>
<dbReference type="EC" id="5.3.1.24" evidence="1"/>
<dbReference type="EMBL" id="CP000348">
    <property type="protein sequence ID" value="ABJ78907.1"/>
    <property type="molecule type" value="Genomic_DNA"/>
</dbReference>
<dbReference type="RefSeq" id="WP_011670113.1">
    <property type="nucleotide sequence ID" value="NC_008508.1"/>
</dbReference>
<dbReference type="SMR" id="Q051T8"/>
<dbReference type="KEGG" id="lbl:LBL_1418"/>
<dbReference type="PATRIC" id="fig|355276.3.peg.1790"/>
<dbReference type="HOGENOM" id="CLU_076364_2_0_12"/>
<dbReference type="UniPathway" id="UPA00035">
    <property type="reaction ID" value="UER00042"/>
</dbReference>
<dbReference type="GO" id="GO:0004640">
    <property type="term" value="F:phosphoribosylanthranilate isomerase activity"/>
    <property type="evidence" value="ECO:0007669"/>
    <property type="project" value="UniProtKB-UniRule"/>
</dbReference>
<dbReference type="GO" id="GO:0000162">
    <property type="term" value="P:L-tryptophan biosynthetic process"/>
    <property type="evidence" value="ECO:0007669"/>
    <property type="project" value="UniProtKB-UniRule"/>
</dbReference>
<dbReference type="CDD" id="cd00405">
    <property type="entry name" value="PRAI"/>
    <property type="match status" value="1"/>
</dbReference>
<dbReference type="Gene3D" id="3.20.20.70">
    <property type="entry name" value="Aldolase class I"/>
    <property type="match status" value="1"/>
</dbReference>
<dbReference type="HAMAP" id="MF_00135">
    <property type="entry name" value="PRAI"/>
    <property type="match status" value="1"/>
</dbReference>
<dbReference type="InterPro" id="IPR013785">
    <property type="entry name" value="Aldolase_TIM"/>
</dbReference>
<dbReference type="InterPro" id="IPR001240">
    <property type="entry name" value="PRAI_dom"/>
</dbReference>
<dbReference type="InterPro" id="IPR011060">
    <property type="entry name" value="RibuloseP-bd_barrel"/>
</dbReference>
<dbReference type="InterPro" id="IPR044643">
    <property type="entry name" value="TrpF_fam"/>
</dbReference>
<dbReference type="PANTHER" id="PTHR42894">
    <property type="entry name" value="N-(5'-PHOSPHORIBOSYL)ANTHRANILATE ISOMERASE"/>
    <property type="match status" value="1"/>
</dbReference>
<dbReference type="PANTHER" id="PTHR42894:SF1">
    <property type="entry name" value="N-(5'-PHOSPHORIBOSYL)ANTHRANILATE ISOMERASE"/>
    <property type="match status" value="1"/>
</dbReference>
<dbReference type="Pfam" id="PF00697">
    <property type="entry name" value="PRAI"/>
    <property type="match status" value="1"/>
</dbReference>
<dbReference type="SUPFAM" id="SSF51366">
    <property type="entry name" value="Ribulose-phoshate binding barrel"/>
    <property type="match status" value="1"/>
</dbReference>
<keyword id="KW-0028">Amino-acid biosynthesis</keyword>
<keyword id="KW-0057">Aromatic amino acid biosynthesis</keyword>
<keyword id="KW-0413">Isomerase</keyword>
<keyword id="KW-0822">Tryptophan biosynthesis</keyword>
<evidence type="ECO:0000255" key="1">
    <source>
        <dbReference type="HAMAP-Rule" id="MF_00135"/>
    </source>
</evidence>
<sequence>MNENTFEKTKIKICGIRDLEIAKICREEGADYIGLNFVPSSPRKISLKDAQKIVEFYRDTKNSPEIVLLFYQNSPEEIRTVTSSLYHDLIQWVWDDPKLTFVDRKNFLGKRQICSYRVNSPIYNEDLKNIPSELLILDSYSKDAGGGTGETFNWNFISRIERKFLLAGGLNSSNVSNAIRTVKPYGVDVASGVESSPGIKDSQKVIQFIRNVRLGL</sequence>
<name>TRPF_LEPBL</name>
<comment type="catalytic activity">
    <reaction evidence="1">
        <text>N-(5-phospho-beta-D-ribosyl)anthranilate = 1-(2-carboxyphenylamino)-1-deoxy-D-ribulose 5-phosphate</text>
        <dbReference type="Rhea" id="RHEA:21540"/>
        <dbReference type="ChEBI" id="CHEBI:18277"/>
        <dbReference type="ChEBI" id="CHEBI:58613"/>
        <dbReference type="EC" id="5.3.1.24"/>
    </reaction>
</comment>
<comment type="pathway">
    <text evidence="1">Amino-acid biosynthesis; L-tryptophan biosynthesis; L-tryptophan from chorismate: step 3/5.</text>
</comment>
<comment type="similarity">
    <text evidence="1">Belongs to the TrpF family.</text>
</comment>